<sequence>MSATKKYEMMILLTEEFNDSELKTWAFNYAKALRKLSASEISVISRGKRDLSYYINNQKKGNFIQINFSSMPKYVDNFSKNLKFDSNVLRFLILNK</sequence>
<accession>P49494</accession>
<gene>
    <name type="primary">rps6</name>
</gene>
<reference key="1">
    <citation type="journal article" date="1995" name="Plant Mol. Biol. Rep.">
        <title>The chloroplast genome of a chlorophyll a+c-containing alga, Odontella sinensis.</title>
        <authorList>
            <person name="Kowallik K.V."/>
            <person name="Stoebe B."/>
            <person name="Schaffran I."/>
            <person name="Kroth-Pancic P."/>
            <person name="Freier U."/>
        </authorList>
    </citation>
    <scope>NUCLEOTIDE SEQUENCE [LARGE SCALE GENOMIC DNA]</scope>
</reference>
<dbReference type="EMBL" id="Z67753">
    <property type="protein sequence ID" value="CAA91617.1"/>
    <property type="molecule type" value="Genomic_DNA"/>
</dbReference>
<dbReference type="PIR" id="S78244">
    <property type="entry name" value="S78244"/>
</dbReference>
<dbReference type="RefSeq" id="NP_043585.1">
    <property type="nucleotide sequence ID" value="NC_001713.1"/>
</dbReference>
<dbReference type="SMR" id="P49494"/>
<dbReference type="GeneID" id="801753"/>
<dbReference type="GO" id="GO:0009507">
    <property type="term" value="C:chloroplast"/>
    <property type="evidence" value="ECO:0007669"/>
    <property type="project" value="UniProtKB-SubCell"/>
</dbReference>
<dbReference type="GO" id="GO:1990904">
    <property type="term" value="C:ribonucleoprotein complex"/>
    <property type="evidence" value="ECO:0007669"/>
    <property type="project" value="UniProtKB-KW"/>
</dbReference>
<dbReference type="GO" id="GO:0005840">
    <property type="term" value="C:ribosome"/>
    <property type="evidence" value="ECO:0007669"/>
    <property type="project" value="UniProtKB-KW"/>
</dbReference>
<dbReference type="GO" id="GO:0070181">
    <property type="term" value="F:small ribosomal subunit rRNA binding"/>
    <property type="evidence" value="ECO:0007669"/>
    <property type="project" value="TreeGrafter"/>
</dbReference>
<dbReference type="GO" id="GO:0003735">
    <property type="term" value="F:structural constituent of ribosome"/>
    <property type="evidence" value="ECO:0007669"/>
    <property type="project" value="InterPro"/>
</dbReference>
<dbReference type="GO" id="GO:0006412">
    <property type="term" value="P:translation"/>
    <property type="evidence" value="ECO:0007669"/>
    <property type="project" value="UniProtKB-UniRule"/>
</dbReference>
<dbReference type="CDD" id="cd00473">
    <property type="entry name" value="bS6"/>
    <property type="match status" value="1"/>
</dbReference>
<dbReference type="Gene3D" id="3.30.70.60">
    <property type="match status" value="1"/>
</dbReference>
<dbReference type="HAMAP" id="MF_00360">
    <property type="entry name" value="Ribosomal_bS6"/>
    <property type="match status" value="1"/>
</dbReference>
<dbReference type="InterPro" id="IPR000529">
    <property type="entry name" value="Ribosomal_bS6"/>
</dbReference>
<dbReference type="InterPro" id="IPR020815">
    <property type="entry name" value="Ribosomal_bS6_CS"/>
</dbReference>
<dbReference type="InterPro" id="IPR035980">
    <property type="entry name" value="Ribosomal_bS6_sf"/>
</dbReference>
<dbReference type="InterPro" id="IPR020814">
    <property type="entry name" value="Ribosomal_S6_plastid/chlpt"/>
</dbReference>
<dbReference type="InterPro" id="IPR014717">
    <property type="entry name" value="Transl_elong_EF1B/ribsomal_bS6"/>
</dbReference>
<dbReference type="NCBIfam" id="TIGR00166">
    <property type="entry name" value="S6"/>
    <property type="match status" value="1"/>
</dbReference>
<dbReference type="PANTHER" id="PTHR21011">
    <property type="entry name" value="MITOCHONDRIAL 28S RIBOSOMAL PROTEIN S6"/>
    <property type="match status" value="1"/>
</dbReference>
<dbReference type="PANTHER" id="PTHR21011:SF1">
    <property type="entry name" value="SMALL RIBOSOMAL SUBUNIT PROTEIN BS6M"/>
    <property type="match status" value="1"/>
</dbReference>
<dbReference type="Pfam" id="PF01250">
    <property type="entry name" value="Ribosomal_S6"/>
    <property type="match status" value="1"/>
</dbReference>
<dbReference type="SUPFAM" id="SSF54995">
    <property type="entry name" value="Ribosomal protein S6"/>
    <property type="match status" value="1"/>
</dbReference>
<dbReference type="PROSITE" id="PS01048">
    <property type="entry name" value="RIBOSOMAL_S6"/>
    <property type="match status" value="1"/>
</dbReference>
<geneLocation type="chloroplast"/>
<name>RR6_TRICV</name>
<comment type="function">
    <text evidence="1">Binds together with bS18 to 16S ribosomal RNA.</text>
</comment>
<comment type="subcellular location">
    <subcellularLocation>
        <location>Plastid</location>
        <location>Chloroplast</location>
    </subcellularLocation>
</comment>
<comment type="similarity">
    <text evidence="2">Belongs to the bacterial ribosomal protein bS6 family.</text>
</comment>
<proteinExistence type="inferred from homology"/>
<evidence type="ECO:0000250" key="1"/>
<evidence type="ECO:0000305" key="2"/>
<protein>
    <recommendedName>
        <fullName evidence="2">Small ribosomal subunit protein bS6c</fullName>
    </recommendedName>
    <alternativeName>
        <fullName>30S ribosomal protein S6, chloroplastic</fullName>
    </alternativeName>
</protein>
<keyword id="KW-0150">Chloroplast</keyword>
<keyword id="KW-0934">Plastid</keyword>
<keyword id="KW-0687">Ribonucleoprotein</keyword>
<keyword id="KW-0689">Ribosomal protein</keyword>
<keyword id="KW-0694">RNA-binding</keyword>
<keyword id="KW-0699">rRNA-binding</keyword>
<organism>
    <name type="scientific">Trieres chinensis</name>
    <name type="common">Marine centric diatom</name>
    <name type="synonym">Odontella sinensis</name>
    <dbReference type="NCBI Taxonomy" id="1514140"/>
    <lineage>
        <taxon>Eukaryota</taxon>
        <taxon>Sar</taxon>
        <taxon>Stramenopiles</taxon>
        <taxon>Ochrophyta</taxon>
        <taxon>Bacillariophyta</taxon>
        <taxon>Mediophyceae</taxon>
        <taxon>Biddulphiophycidae</taxon>
        <taxon>Eupodiscales</taxon>
        <taxon>Parodontellaceae</taxon>
        <taxon>Trieres</taxon>
    </lineage>
</organism>
<feature type="chain" id="PRO_0000176889" description="Small ribosomal subunit protein bS6c">
    <location>
        <begin position="1"/>
        <end position="96"/>
    </location>
</feature>